<dbReference type="EC" id="2.6.1.9" evidence="1"/>
<dbReference type="EMBL" id="CP000698">
    <property type="protein sequence ID" value="ABQ28429.1"/>
    <property type="molecule type" value="Genomic_DNA"/>
</dbReference>
<dbReference type="RefSeq" id="WP_011941059.1">
    <property type="nucleotide sequence ID" value="NC_009483.1"/>
</dbReference>
<dbReference type="SMR" id="A5G9G1"/>
<dbReference type="STRING" id="351605.Gura_4286"/>
<dbReference type="KEGG" id="gur:Gura_4286"/>
<dbReference type="HOGENOM" id="CLU_017584_3_0_7"/>
<dbReference type="OrthoDB" id="9813612at2"/>
<dbReference type="UniPathway" id="UPA00031">
    <property type="reaction ID" value="UER00012"/>
</dbReference>
<dbReference type="Proteomes" id="UP000006695">
    <property type="component" value="Chromosome"/>
</dbReference>
<dbReference type="GO" id="GO:0004400">
    <property type="term" value="F:histidinol-phosphate transaminase activity"/>
    <property type="evidence" value="ECO:0007669"/>
    <property type="project" value="UniProtKB-UniRule"/>
</dbReference>
<dbReference type="GO" id="GO:0030170">
    <property type="term" value="F:pyridoxal phosphate binding"/>
    <property type="evidence" value="ECO:0007669"/>
    <property type="project" value="InterPro"/>
</dbReference>
<dbReference type="GO" id="GO:0000105">
    <property type="term" value="P:L-histidine biosynthetic process"/>
    <property type="evidence" value="ECO:0007669"/>
    <property type="project" value="UniProtKB-UniRule"/>
</dbReference>
<dbReference type="CDD" id="cd00609">
    <property type="entry name" value="AAT_like"/>
    <property type="match status" value="1"/>
</dbReference>
<dbReference type="Gene3D" id="3.90.1150.10">
    <property type="entry name" value="Aspartate Aminotransferase, domain 1"/>
    <property type="match status" value="1"/>
</dbReference>
<dbReference type="Gene3D" id="3.40.640.10">
    <property type="entry name" value="Type I PLP-dependent aspartate aminotransferase-like (Major domain)"/>
    <property type="match status" value="1"/>
</dbReference>
<dbReference type="HAMAP" id="MF_01023">
    <property type="entry name" value="HisC_aminotrans_2"/>
    <property type="match status" value="1"/>
</dbReference>
<dbReference type="InterPro" id="IPR001917">
    <property type="entry name" value="Aminotrans_II_pyridoxalP_BS"/>
</dbReference>
<dbReference type="InterPro" id="IPR004839">
    <property type="entry name" value="Aminotransferase_I/II_large"/>
</dbReference>
<dbReference type="InterPro" id="IPR005861">
    <property type="entry name" value="HisP_aminotrans"/>
</dbReference>
<dbReference type="InterPro" id="IPR015424">
    <property type="entry name" value="PyrdxlP-dep_Trfase"/>
</dbReference>
<dbReference type="InterPro" id="IPR015421">
    <property type="entry name" value="PyrdxlP-dep_Trfase_major"/>
</dbReference>
<dbReference type="InterPro" id="IPR015422">
    <property type="entry name" value="PyrdxlP-dep_Trfase_small"/>
</dbReference>
<dbReference type="NCBIfam" id="TIGR01141">
    <property type="entry name" value="hisC"/>
    <property type="match status" value="1"/>
</dbReference>
<dbReference type="PANTHER" id="PTHR42885:SF2">
    <property type="entry name" value="HISTIDINOL-PHOSPHATE AMINOTRANSFERASE"/>
    <property type="match status" value="1"/>
</dbReference>
<dbReference type="PANTHER" id="PTHR42885">
    <property type="entry name" value="HISTIDINOL-PHOSPHATE AMINOTRANSFERASE-RELATED"/>
    <property type="match status" value="1"/>
</dbReference>
<dbReference type="Pfam" id="PF00155">
    <property type="entry name" value="Aminotran_1_2"/>
    <property type="match status" value="1"/>
</dbReference>
<dbReference type="SUPFAM" id="SSF53383">
    <property type="entry name" value="PLP-dependent transferases"/>
    <property type="match status" value="1"/>
</dbReference>
<dbReference type="PROSITE" id="PS00599">
    <property type="entry name" value="AA_TRANSFER_CLASS_2"/>
    <property type="match status" value="1"/>
</dbReference>
<keyword id="KW-0028">Amino-acid biosynthesis</keyword>
<keyword id="KW-0032">Aminotransferase</keyword>
<keyword id="KW-0368">Histidine biosynthesis</keyword>
<keyword id="KW-0663">Pyridoxal phosphate</keyword>
<keyword id="KW-1185">Reference proteome</keyword>
<keyword id="KW-0808">Transferase</keyword>
<protein>
    <recommendedName>
        <fullName evidence="1">Histidinol-phosphate aminotransferase</fullName>
        <ecNumber evidence="1">2.6.1.9</ecNumber>
    </recommendedName>
    <alternativeName>
        <fullName evidence="1">Imidazole acetol-phosphate transaminase</fullName>
    </alternativeName>
</protein>
<reference key="1">
    <citation type="submission" date="2007-05" db="EMBL/GenBank/DDBJ databases">
        <title>Complete sequence of Geobacter uraniireducens Rf4.</title>
        <authorList>
            <consortium name="US DOE Joint Genome Institute"/>
            <person name="Copeland A."/>
            <person name="Lucas S."/>
            <person name="Lapidus A."/>
            <person name="Barry K."/>
            <person name="Detter J.C."/>
            <person name="Glavina del Rio T."/>
            <person name="Hammon N."/>
            <person name="Israni S."/>
            <person name="Dalin E."/>
            <person name="Tice H."/>
            <person name="Pitluck S."/>
            <person name="Chertkov O."/>
            <person name="Brettin T."/>
            <person name="Bruce D."/>
            <person name="Han C."/>
            <person name="Schmutz J."/>
            <person name="Larimer F."/>
            <person name="Land M."/>
            <person name="Hauser L."/>
            <person name="Kyrpides N."/>
            <person name="Mikhailova N."/>
            <person name="Shelobolina E."/>
            <person name="Aklujkar M."/>
            <person name="Lovley D."/>
            <person name="Richardson P."/>
        </authorList>
    </citation>
    <scope>NUCLEOTIDE SEQUENCE [LARGE SCALE GENOMIC DNA]</scope>
    <source>
        <strain>ATCC BAA-1134 / JCM 13001 / Rf4</strain>
    </source>
</reference>
<feature type="chain" id="PRO_1000084194" description="Histidinol-phosphate aminotransferase">
    <location>
        <begin position="1"/>
        <end position="347"/>
    </location>
</feature>
<feature type="modified residue" description="N6-(pyridoxal phosphate)lysine" evidence="1">
    <location>
        <position position="209"/>
    </location>
</feature>
<organism>
    <name type="scientific">Geotalea uraniireducens (strain Rf4)</name>
    <name type="common">Geobacter uraniireducens</name>
    <dbReference type="NCBI Taxonomy" id="351605"/>
    <lineage>
        <taxon>Bacteria</taxon>
        <taxon>Pseudomonadati</taxon>
        <taxon>Thermodesulfobacteriota</taxon>
        <taxon>Desulfuromonadia</taxon>
        <taxon>Geobacterales</taxon>
        <taxon>Geobacteraceae</taxon>
        <taxon>Geotalea</taxon>
    </lineage>
</organism>
<comment type="catalytic activity">
    <reaction evidence="1">
        <text>L-histidinol phosphate + 2-oxoglutarate = 3-(imidazol-4-yl)-2-oxopropyl phosphate + L-glutamate</text>
        <dbReference type="Rhea" id="RHEA:23744"/>
        <dbReference type="ChEBI" id="CHEBI:16810"/>
        <dbReference type="ChEBI" id="CHEBI:29985"/>
        <dbReference type="ChEBI" id="CHEBI:57766"/>
        <dbReference type="ChEBI" id="CHEBI:57980"/>
        <dbReference type="EC" id="2.6.1.9"/>
    </reaction>
</comment>
<comment type="cofactor">
    <cofactor evidence="1">
        <name>pyridoxal 5'-phosphate</name>
        <dbReference type="ChEBI" id="CHEBI:597326"/>
    </cofactor>
</comment>
<comment type="pathway">
    <text evidence="1">Amino-acid biosynthesis; L-histidine biosynthesis; L-histidine from 5-phospho-alpha-D-ribose 1-diphosphate: step 7/9.</text>
</comment>
<comment type="subunit">
    <text evidence="1">Homodimer.</text>
</comment>
<comment type="similarity">
    <text evidence="1">Belongs to the class-II pyridoxal-phosphate-dependent aminotransferase family. Histidinol-phosphate aminotransferase subfamily.</text>
</comment>
<gene>
    <name evidence="1" type="primary">hisC</name>
    <name type="ordered locus">Gura_4286</name>
</gene>
<name>HIS8_GEOUR</name>
<evidence type="ECO:0000255" key="1">
    <source>
        <dbReference type="HAMAP-Rule" id="MF_01023"/>
    </source>
</evidence>
<accession>A5G9G1</accession>
<proteinExistence type="inferred from homology"/>
<sequence>MIPLRKNIARMAGYVPGYQPEDPAAYIKLNTNENAYPPSPKVLEAIMAEVGEGLRRYPDAASRAGREAAARLYGFLPEWIVMANGSDEVLNNLIRAFADEGDEIAYVYPSYSYYATLAEIQGARVKTYGLTDDWKLANFPERYDGKIFFLTNPNAPYGFTFSREFIEELAGRVAGMLVVDETYADFAGDTALDLVRKYENVVVTRTLSKSYSLAGMRLGLAVARPEVIAALDKIRDHYNLDRLAQAAAVAALGDQDYFREAVRKICETRDWFSAELRKLRYSVIPSSGNYVFTTPPDRDGARVYQGLFDRKILVRHFSDPNLAHGLRISIGTREEMEKTMEALREIG</sequence>